<proteinExistence type="inferred from homology"/>
<comment type="function">
    <text evidence="1">Transfers and isomerizes the ribose moiety from AdoMet to the 7-aminomethyl group of 7-deazaguanine (preQ1-tRNA) to give epoxyqueuosine (oQ-tRNA).</text>
</comment>
<comment type="catalytic activity">
    <reaction evidence="1">
        <text>7-aminomethyl-7-carbaguanosine(34) in tRNA + S-adenosyl-L-methionine = epoxyqueuosine(34) in tRNA + adenine + L-methionine + 2 H(+)</text>
        <dbReference type="Rhea" id="RHEA:32155"/>
        <dbReference type="Rhea" id="RHEA-COMP:10342"/>
        <dbReference type="Rhea" id="RHEA-COMP:18582"/>
        <dbReference type="ChEBI" id="CHEBI:15378"/>
        <dbReference type="ChEBI" id="CHEBI:16708"/>
        <dbReference type="ChEBI" id="CHEBI:57844"/>
        <dbReference type="ChEBI" id="CHEBI:59789"/>
        <dbReference type="ChEBI" id="CHEBI:82833"/>
        <dbReference type="ChEBI" id="CHEBI:194443"/>
        <dbReference type="EC" id="2.4.99.17"/>
    </reaction>
</comment>
<comment type="pathway">
    <text evidence="1">tRNA modification; tRNA-queuosine biosynthesis.</text>
</comment>
<comment type="subunit">
    <text evidence="1">Monomer.</text>
</comment>
<comment type="subcellular location">
    <subcellularLocation>
        <location evidence="1">Cytoplasm</location>
    </subcellularLocation>
</comment>
<comment type="similarity">
    <text evidence="1">Belongs to the QueA family.</text>
</comment>
<dbReference type="EC" id="2.4.99.17" evidence="1"/>
<dbReference type="EMBL" id="CP000675">
    <property type="protein sequence ID" value="ABQ55436.1"/>
    <property type="molecule type" value="Genomic_DNA"/>
</dbReference>
<dbReference type="RefSeq" id="WP_011946911.1">
    <property type="nucleotide sequence ID" value="NC_009494.2"/>
</dbReference>
<dbReference type="SMR" id="A5IDI6"/>
<dbReference type="KEGG" id="lpc:LPC_1487"/>
<dbReference type="HOGENOM" id="CLU_039110_1_0_6"/>
<dbReference type="UniPathway" id="UPA00392"/>
<dbReference type="GO" id="GO:0005737">
    <property type="term" value="C:cytoplasm"/>
    <property type="evidence" value="ECO:0007669"/>
    <property type="project" value="UniProtKB-SubCell"/>
</dbReference>
<dbReference type="GO" id="GO:0051075">
    <property type="term" value="F:S-adenosylmethionine:tRNA ribosyltransferase-isomerase activity"/>
    <property type="evidence" value="ECO:0007669"/>
    <property type="project" value="UniProtKB-EC"/>
</dbReference>
<dbReference type="GO" id="GO:0008616">
    <property type="term" value="P:queuosine biosynthetic process"/>
    <property type="evidence" value="ECO:0007669"/>
    <property type="project" value="UniProtKB-UniRule"/>
</dbReference>
<dbReference type="GO" id="GO:0002099">
    <property type="term" value="P:tRNA wobble guanine modification"/>
    <property type="evidence" value="ECO:0007669"/>
    <property type="project" value="TreeGrafter"/>
</dbReference>
<dbReference type="FunFam" id="3.40.1780.10:FF:000001">
    <property type="entry name" value="S-adenosylmethionine:tRNA ribosyltransferase-isomerase"/>
    <property type="match status" value="1"/>
</dbReference>
<dbReference type="Gene3D" id="2.40.10.240">
    <property type="entry name" value="QueA-like"/>
    <property type="match status" value="1"/>
</dbReference>
<dbReference type="Gene3D" id="3.40.1780.10">
    <property type="entry name" value="QueA-like"/>
    <property type="match status" value="1"/>
</dbReference>
<dbReference type="HAMAP" id="MF_00113">
    <property type="entry name" value="QueA"/>
    <property type="match status" value="1"/>
</dbReference>
<dbReference type="InterPro" id="IPR003699">
    <property type="entry name" value="QueA"/>
</dbReference>
<dbReference type="InterPro" id="IPR042118">
    <property type="entry name" value="QueA_dom1"/>
</dbReference>
<dbReference type="InterPro" id="IPR042119">
    <property type="entry name" value="QueA_dom2"/>
</dbReference>
<dbReference type="InterPro" id="IPR036100">
    <property type="entry name" value="QueA_sf"/>
</dbReference>
<dbReference type="NCBIfam" id="NF001140">
    <property type="entry name" value="PRK00147.1"/>
    <property type="match status" value="1"/>
</dbReference>
<dbReference type="NCBIfam" id="TIGR00113">
    <property type="entry name" value="queA"/>
    <property type="match status" value="1"/>
</dbReference>
<dbReference type="PANTHER" id="PTHR30307">
    <property type="entry name" value="S-ADENOSYLMETHIONINE:TRNA RIBOSYLTRANSFERASE-ISOMERASE"/>
    <property type="match status" value="1"/>
</dbReference>
<dbReference type="PANTHER" id="PTHR30307:SF0">
    <property type="entry name" value="S-ADENOSYLMETHIONINE:TRNA RIBOSYLTRANSFERASE-ISOMERASE"/>
    <property type="match status" value="1"/>
</dbReference>
<dbReference type="Pfam" id="PF02547">
    <property type="entry name" value="Queuosine_synth"/>
    <property type="match status" value="1"/>
</dbReference>
<dbReference type="SUPFAM" id="SSF111337">
    <property type="entry name" value="QueA-like"/>
    <property type="match status" value="1"/>
</dbReference>
<evidence type="ECO:0000255" key="1">
    <source>
        <dbReference type="HAMAP-Rule" id="MF_00113"/>
    </source>
</evidence>
<protein>
    <recommendedName>
        <fullName evidence="1">S-adenosylmethionine:tRNA ribosyltransferase-isomerase</fullName>
        <ecNumber evidence="1">2.4.99.17</ecNumber>
    </recommendedName>
    <alternativeName>
        <fullName evidence="1">Queuosine biosynthesis protein QueA</fullName>
    </alternativeName>
</protein>
<reference key="1">
    <citation type="submission" date="2006-11" db="EMBL/GenBank/DDBJ databases">
        <title>Identification and characterization of a new conjugation/ type IVA secretion system (trb/tra) of L. pneumophila Corby localized on a mobile genomic island.</title>
        <authorList>
            <person name="Gloeckner G."/>
            <person name="Albert-Weissenberger C."/>
            <person name="Weinmann E."/>
            <person name="Jacobi S."/>
            <person name="Schunder E."/>
            <person name="Steinert M."/>
            <person name="Buchrieser C."/>
            <person name="Hacker J."/>
            <person name="Heuner K."/>
        </authorList>
    </citation>
    <scope>NUCLEOTIDE SEQUENCE [LARGE SCALE GENOMIC DNA]</scope>
    <source>
        <strain>Corby</strain>
    </source>
</reference>
<name>QUEA_LEGPC</name>
<feature type="chain" id="PRO_1000015231" description="S-adenosylmethionine:tRNA ribosyltransferase-isomerase">
    <location>
        <begin position="1"/>
        <end position="337"/>
    </location>
</feature>
<sequence length="337" mass="37824">MNKQDFYFDLPSELIAQYPLANRSDSRLLIYNRQTEEYGHYQFREIADFLQPGDLLVMNDSKVIPARLYGHKATGGKVELLVERITGDFTFLAHIKASKSLKSNDFIYLDAGKRLEVLERQDDLFLCKASENILDLLNDLGHIPLPPYIAREDESLDKERYQTVYAKCAGSVAAPTAGLHFDDAVLSSIRARGVNIAYVTLHVGAGTFRPVRCERIQDHKMHSEWFTVSPDLCAAVKAAKSMGNRVIAVGTTALRSLESAAMGGELIPCSRDTDIFIYPGYQFKVCDGLITNFHLPESTLVMLVSAFIGHQECMALYQEAIDKRYRFFSYGDASLLL</sequence>
<organism>
    <name type="scientific">Legionella pneumophila (strain Corby)</name>
    <dbReference type="NCBI Taxonomy" id="400673"/>
    <lineage>
        <taxon>Bacteria</taxon>
        <taxon>Pseudomonadati</taxon>
        <taxon>Pseudomonadota</taxon>
        <taxon>Gammaproteobacteria</taxon>
        <taxon>Legionellales</taxon>
        <taxon>Legionellaceae</taxon>
        <taxon>Legionella</taxon>
    </lineage>
</organism>
<accession>A5IDI6</accession>
<keyword id="KW-0963">Cytoplasm</keyword>
<keyword id="KW-0671">Queuosine biosynthesis</keyword>
<keyword id="KW-0949">S-adenosyl-L-methionine</keyword>
<keyword id="KW-0808">Transferase</keyword>
<gene>
    <name evidence="1" type="primary">queA</name>
    <name type="ordered locus">LPC_1487</name>
</gene>